<sequence length="511" mass="55459">MTNKLIIFDTTLRDGEQSPGASMTKDEKIRIAKVLEKMKVDVIEAGFAIASEGDFEAVQAVANIVQNSVICSLARALDKDIDRAGEALKGANASRIHTFIATSNIHMKMKLQMTPDQVVGQAVRAVKRANRYTDNIEFSPEDAGRSDEDFLCYIIEAVIKAGATTINIPDTVGYNIPHQFGATIKSLIERIPNSDKAIFSAHCHNDLGLAVANSLSAVLNGARQVECTINGLGERAGNTSLEELVMAVRTRQDIFDCDTNIDTMHILSASRLASSVTGFIIQPNKAIVGANAFAHEAGIHQDGVLKHRETYEIMRAEDVGWNANQLVLGKHSGRNAFKVRLAKLGVEFNDDGSLNDAFRRFKELADKKHEIFDEDLQALVSETQTESCDEAIKLVSLKVCTETNEKNTATVVLFINDKKKTATANTSGAVDATFSAINSLASIKINLQLYSVSNVTQGTDALGEVNVRLEYNGRIVNGQGVDTDIITASAKAYVHGLNKVLTVTNKAHPQI</sequence>
<proteinExistence type="inferred from homology"/>
<protein>
    <recommendedName>
        <fullName evidence="1">2-isopropylmalate synthase</fullName>
        <ecNumber evidence="1">2.3.3.13</ecNumber>
    </recommendedName>
    <alternativeName>
        <fullName evidence="1">Alpha-IPM synthase</fullName>
    </alternativeName>
    <alternativeName>
        <fullName evidence="1">Alpha-isopropylmalate synthase</fullName>
    </alternativeName>
</protein>
<dbReference type="EC" id="2.3.3.13" evidence="1"/>
<dbReference type="EMBL" id="AP009247">
    <property type="protein sequence ID" value="BAF61534.1"/>
    <property type="molecule type" value="Genomic_DNA"/>
</dbReference>
<dbReference type="RefSeq" id="WP_011929804.1">
    <property type="nucleotide sequence ID" value="NC_009465.1"/>
</dbReference>
<dbReference type="SMR" id="A5CWZ3"/>
<dbReference type="STRING" id="412965.COSY_0415"/>
<dbReference type="KEGG" id="vok:COSY_0415"/>
<dbReference type="eggNOG" id="COG0119">
    <property type="taxonomic scope" value="Bacteria"/>
</dbReference>
<dbReference type="HOGENOM" id="CLU_022158_0_1_6"/>
<dbReference type="OrthoDB" id="9803573at2"/>
<dbReference type="UniPathway" id="UPA00048">
    <property type="reaction ID" value="UER00070"/>
</dbReference>
<dbReference type="Proteomes" id="UP000000247">
    <property type="component" value="Chromosome"/>
</dbReference>
<dbReference type="GO" id="GO:0005829">
    <property type="term" value="C:cytosol"/>
    <property type="evidence" value="ECO:0007669"/>
    <property type="project" value="TreeGrafter"/>
</dbReference>
<dbReference type="GO" id="GO:0003852">
    <property type="term" value="F:2-isopropylmalate synthase activity"/>
    <property type="evidence" value="ECO:0007669"/>
    <property type="project" value="UniProtKB-UniRule"/>
</dbReference>
<dbReference type="GO" id="GO:0003985">
    <property type="term" value="F:acetyl-CoA C-acetyltransferase activity"/>
    <property type="evidence" value="ECO:0007669"/>
    <property type="project" value="UniProtKB-UniRule"/>
</dbReference>
<dbReference type="GO" id="GO:0030145">
    <property type="term" value="F:manganese ion binding"/>
    <property type="evidence" value="ECO:0007669"/>
    <property type="project" value="UniProtKB-UniRule"/>
</dbReference>
<dbReference type="GO" id="GO:0009098">
    <property type="term" value="P:L-leucine biosynthetic process"/>
    <property type="evidence" value="ECO:0007669"/>
    <property type="project" value="UniProtKB-UniRule"/>
</dbReference>
<dbReference type="CDD" id="cd07940">
    <property type="entry name" value="DRE_TIM_IPMS"/>
    <property type="match status" value="1"/>
</dbReference>
<dbReference type="FunFam" id="1.10.238.260:FF:000001">
    <property type="entry name" value="2-isopropylmalate synthase"/>
    <property type="match status" value="1"/>
</dbReference>
<dbReference type="FunFam" id="3.20.20.70:FF:000010">
    <property type="entry name" value="2-isopropylmalate synthase"/>
    <property type="match status" value="1"/>
</dbReference>
<dbReference type="FunFam" id="3.30.160.270:FF:000003">
    <property type="entry name" value="2-isopropylmalate synthase"/>
    <property type="match status" value="1"/>
</dbReference>
<dbReference type="Gene3D" id="1.10.238.260">
    <property type="match status" value="1"/>
</dbReference>
<dbReference type="Gene3D" id="3.30.160.270">
    <property type="match status" value="1"/>
</dbReference>
<dbReference type="Gene3D" id="3.20.20.70">
    <property type="entry name" value="Aldolase class I"/>
    <property type="match status" value="1"/>
</dbReference>
<dbReference type="HAMAP" id="MF_01025">
    <property type="entry name" value="LeuA_type1"/>
    <property type="match status" value="1"/>
</dbReference>
<dbReference type="InterPro" id="IPR050073">
    <property type="entry name" value="2-IPM_HCS-like"/>
</dbReference>
<dbReference type="InterPro" id="IPR013709">
    <property type="entry name" value="2-isopropylmalate_synth_dimer"/>
</dbReference>
<dbReference type="InterPro" id="IPR002034">
    <property type="entry name" value="AIPM/Hcit_synth_CS"/>
</dbReference>
<dbReference type="InterPro" id="IPR013785">
    <property type="entry name" value="Aldolase_TIM"/>
</dbReference>
<dbReference type="InterPro" id="IPR054691">
    <property type="entry name" value="LeuA/HCS_post-cat"/>
</dbReference>
<dbReference type="InterPro" id="IPR036230">
    <property type="entry name" value="LeuA_allosteric_dom_sf"/>
</dbReference>
<dbReference type="InterPro" id="IPR005671">
    <property type="entry name" value="LeuA_bact_synth"/>
</dbReference>
<dbReference type="InterPro" id="IPR000891">
    <property type="entry name" value="PYR_CT"/>
</dbReference>
<dbReference type="NCBIfam" id="TIGR00973">
    <property type="entry name" value="leuA_bact"/>
    <property type="match status" value="1"/>
</dbReference>
<dbReference type="NCBIfam" id="NF002086">
    <property type="entry name" value="PRK00915.1-3"/>
    <property type="match status" value="1"/>
</dbReference>
<dbReference type="NCBIfam" id="NF002087">
    <property type="entry name" value="PRK00915.1-4"/>
    <property type="match status" value="1"/>
</dbReference>
<dbReference type="PANTHER" id="PTHR10277:SF9">
    <property type="entry name" value="2-ISOPROPYLMALATE SYNTHASE 1, CHLOROPLASTIC-RELATED"/>
    <property type="match status" value="1"/>
</dbReference>
<dbReference type="PANTHER" id="PTHR10277">
    <property type="entry name" value="HOMOCITRATE SYNTHASE-RELATED"/>
    <property type="match status" value="1"/>
</dbReference>
<dbReference type="Pfam" id="PF22617">
    <property type="entry name" value="HCS_D2"/>
    <property type="match status" value="1"/>
</dbReference>
<dbReference type="Pfam" id="PF00682">
    <property type="entry name" value="HMGL-like"/>
    <property type="match status" value="1"/>
</dbReference>
<dbReference type="Pfam" id="PF08502">
    <property type="entry name" value="LeuA_dimer"/>
    <property type="match status" value="1"/>
</dbReference>
<dbReference type="SMART" id="SM00917">
    <property type="entry name" value="LeuA_dimer"/>
    <property type="match status" value="1"/>
</dbReference>
<dbReference type="SUPFAM" id="SSF110921">
    <property type="entry name" value="2-isopropylmalate synthase LeuA, allosteric (dimerisation) domain"/>
    <property type="match status" value="1"/>
</dbReference>
<dbReference type="SUPFAM" id="SSF51569">
    <property type="entry name" value="Aldolase"/>
    <property type="match status" value="1"/>
</dbReference>
<dbReference type="PROSITE" id="PS00815">
    <property type="entry name" value="AIPM_HOMOCIT_SYNTH_1"/>
    <property type="match status" value="1"/>
</dbReference>
<dbReference type="PROSITE" id="PS00816">
    <property type="entry name" value="AIPM_HOMOCIT_SYNTH_2"/>
    <property type="match status" value="1"/>
</dbReference>
<dbReference type="PROSITE" id="PS50991">
    <property type="entry name" value="PYR_CT"/>
    <property type="match status" value="1"/>
</dbReference>
<accession>A5CWZ3</accession>
<evidence type="ECO:0000255" key="1">
    <source>
        <dbReference type="HAMAP-Rule" id="MF_01025"/>
    </source>
</evidence>
<reference key="1">
    <citation type="journal article" date="2007" name="Curr. Biol.">
        <title>Reduced genome of the thioautotrophic intracellular symbiont in a deep-sea clam, Calyptogena okutanii.</title>
        <authorList>
            <person name="Kuwahara H."/>
            <person name="Yoshida T."/>
            <person name="Takaki Y."/>
            <person name="Shimamura S."/>
            <person name="Nishi S."/>
            <person name="Harada M."/>
            <person name="Matsuyama K."/>
            <person name="Takishita K."/>
            <person name="Kawato M."/>
            <person name="Uematsu K."/>
            <person name="Fujiwara Y."/>
            <person name="Sato T."/>
            <person name="Kato C."/>
            <person name="Kitagawa M."/>
            <person name="Kato I."/>
            <person name="Maruyama T."/>
        </authorList>
    </citation>
    <scope>NUCLEOTIDE SEQUENCE [LARGE SCALE GENOMIC DNA]</scope>
    <source>
        <strain>HA</strain>
    </source>
</reference>
<feature type="chain" id="PRO_1000149327" description="2-isopropylmalate synthase">
    <location>
        <begin position="1"/>
        <end position="511"/>
    </location>
</feature>
<feature type="domain" description="Pyruvate carboxyltransferase" evidence="1">
    <location>
        <begin position="5"/>
        <end position="267"/>
    </location>
</feature>
<feature type="region of interest" description="Regulatory domain" evidence="1">
    <location>
        <begin position="393"/>
        <end position="511"/>
    </location>
</feature>
<feature type="binding site" evidence="1">
    <location>
        <position position="14"/>
    </location>
    <ligand>
        <name>Mn(2+)</name>
        <dbReference type="ChEBI" id="CHEBI:29035"/>
    </ligand>
</feature>
<feature type="binding site" evidence="1">
    <location>
        <position position="202"/>
    </location>
    <ligand>
        <name>Mn(2+)</name>
        <dbReference type="ChEBI" id="CHEBI:29035"/>
    </ligand>
</feature>
<feature type="binding site" evidence="1">
    <location>
        <position position="204"/>
    </location>
    <ligand>
        <name>Mn(2+)</name>
        <dbReference type="ChEBI" id="CHEBI:29035"/>
    </ligand>
</feature>
<feature type="binding site" evidence="1">
    <location>
        <position position="238"/>
    </location>
    <ligand>
        <name>Mn(2+)</name>
        <dbReference type="ChEBI" id="CHEBI:29035"/>
    </ligand>
</feature>
<gene>
    <name evidence="1" type="primary">leuA</name>
    <name type="ordered locus">COSY_0415</name>
</gene>
<comment type="function">
    <text evidence="1">Catalyzes the condensation of the acetyl group of acetyl-CoA with 3-methyl-2-oxobutanoate (2-ketoisovalerate) to form 3-carboxy-3-hydroxy-4-methylpentanoate (2-isopropylmalate).</text>
</comment>
<comment type="catalytic activity">
    <reaction evidence="1">
        <text>3-methyl-2-oxobutanoate + acetyl-CoA + H2O = (2S)-2-isopropylmalate + CoA + H(+)</text>
        <dbReference type="Rhea" id="RHEA:21524"/>
        <dbReference type="ChEBI" id="CHEBI:1178"/>
        <dbReference type="ChEBI" id="CHEBI:11851"/>
        <dbReference type="ChEBI" id="CHEBI:15377"/>
        <dbReference type="ChEBI" id="CHEBI:15378"/>
        <dbReference type="ChEBI" id="CHEBI:57287"/>
        <dbReference type="ChEBI" id="CHEBI:57288"/>
        <dbReference type="EC" id="2.3.3.13"/>
    </reaction>
</comment>
<comment type="cofactor">
    <cofactor evidence="1">
        <name>Mn(2+)</name>
        <dbReference type="ChEBI" id="CHEBI:29035"/>
    </cofactor>
</comment>
<comment type="pathway">
    <text evidence="1">Amino-acid biosynthesis; L-leucine biosynthesis; L-leucine from 3-methyl-2-oxobutanoate: step 1/4.</text>
</comment>
<comment type="subunit">
    <text evidence="1">Homodimer.</text>
</comment>
<comment type="subcellular location">
    <subcellularLocation>
        <location evidence="1">Cytoplasm</location>
    </subcellularLocation>
</comment>
<comment type="similarity">
    <text evidence="1">Belongs to the alpha-IPM synthase/homocitrate synthase family. LeuA type 1 subfamily.</text>
</comment>
<name>LEU1_VESOH</name>
<keyword id="KW-0028">Amino-acid biosynthesis</keyword>
<keyword id="KW-0100">Branched-chain amino acid biosynthesis</keyword>
<keyword id="KW-0963">Cytoplasm</keyword>
<keyword id="KW-0432">Leucine biosynthesis</keyword>
<keyword id="KW-0464">Manganese</keyword>
<keyword id="KW-0479">Metal-binding</keyword>
<keyword id="KW-1185">Reference proteome</keyword>
<keyword id="KW-0808">Transferase</keyword>
<organism>
    <name type="scientific">Vesicomyosocius okutanii subsp. Calyptogena okutanii (strain HA)</name>
    <dbReference type="NCBI Taxonomy" id="412965"/>
    <lineage>
        <taxon>Bacteria</taxon>
        <taxon>Pseudomonadati</taxon>
        <taxon>Pseudomonadota</taxon>
        <taxon>Gammaproteobacteria</taxon>
        <taxon>Candidatus Pseudothioglobaceae</taxon>
        <taxon>Candidatus Vesicomyosocius</taxon>
    </lineage>
</organism>